<comment type="function">
    <text evidence="1">Catalyzes the reversible oxidation of malate to oxaloacetate.</text>
</comment>
<comment type="catalytic activity">
    <reaction>
        <text>(S)-malate + NAD(+) = oxaloacetate + NADH + H(+)</text>
        <dbReference type="Rhea" id="RHEA:21432"/>
        <dbReference type="ChEBI" id="CHEBI:15378"/>
        <dbReference type="ChEBI" id="CHEBI:15589"/>
        <dbReference type="ChEBI" id="CHEBI:16452"/>
        <dbReference type="ChEBI" id="CHEBI:57540"/>
        <dbReference type="ChEBI" id="CHEBI:57945"/>
        <dbReference type="EC" id="1.1.1.37"/>
    </reaction>
</comment>
<comment type="subunit">
    <text evidence="1">Homodimer.</text>
</comment>
<comment type="subcellular location">
    <subcellularLocation>
        <location evidence="3">Mitochondrion</location>
    </subcellularLocation>
</comment>
<comment type="similarity">
    <text evidence="3">Belongs to the LDH/MDH superfamily. MDH type 2 family.</text>
</comment>
<reference key="1">
    <citation type="journal article" date="2005" name="Nature">
        <title>The genome of the social amoeba Dictyostelium discoideum.</title>
        <authorList>
            <person name="Eichinger L."/>
            <person name="Pachebat J.A."/>
            <person name="Gloeckner G."/>
            <person name="Rajandream M.A."/>
            <person name="Sucgang R."/>
            <person name="Berriman M."/>
            <person name="Song J."/>
            <person name="Olsen R."/>
            <person name="Szafranski K."/>
            <person name="Xu Q."/>
            <person name="Tunggal B."/>
            <person name="Kummerfeld S."/>
            <person name="Madera M."/>
            <person name="Konfortov B.A."/>
            <person name="Rivero F."/>
            <person name="Bankier A.T."/>
            <person name="Lehmann R."/>
            <person name="Hamlin N."/>
            <person name="Davies R."/>
            <person name="Gaudet P."/>
            <person name="Fey P."/>
            <person name="Pilcher K."/>
            <person name="Chen G."/>
            <person name="Saunders D."/>
            <person name="Sodergren E.J."/>
            <person name="Davis P."/>
            <person name="Kerhornou A."/>
            <person name="Nie X."/>
            <person name="Hall N."/>
            <person name="Anjard C."/>
            <person name="Hemphill L."/>
            <person name="Bason N."/>
            <person name="Farbrother P."/>
            <person name="Desany B."/>
            <person name="Just E."/>
            <person name="Morio T."/>
            <person name="Rost R."/>
            <person name="Churcher C.M."/>
            <person name="Cooper J."/>
            <person name="Haydock S."/>
            <person name="van Driessche N."/>
            <person name="Cronin A."/>
            <person name="Goodhead I."/>
            <person name="Muzny D.M."/>
            <person name="Mourier T."/>
            <person name="Pain A."/>
            <person name="Lu M."/>
            <person name="Harper D."/>
            <person name="Lindsay R."/>
            <person name="Hauser H."/>
            <person name="James K.D."/>
            <person name="Quiles M."/>
            <person name="Madan Babu M."/>
            <person name="Saito T."/>
            <person name="Buchrieser C."/>
            <person name="Wardroper A."/>
            <person name="Felder M."/>
            <person name="Thangavelu M."/>
            <person name="Johnson D."/>
            <person name="Knights A."/>
            <person name="Loulseged H."/>
            <person name="Mungall K.L."/>
            <person name="Oliver K."/>
            <person name="Price C."/>
            <person name="Quail M.A."/>
            <person name="Urushihara H."/>
            <person name="Hernandez J."/>
            <person name="Rabbinowitsch E."/>
            <person name="Steffen D."/>
            <person name="Sanders M."/>
            <person name="Ma J."/>
            <person name="Kohara Y."/>
            <person name="Sharp S."/>
            <person name="Simmonds M.N."/>
            <person name="Spiegler S."/>
            <person name="Tivey A."/>
            <person name="Sugano S."/>
            <person name="White B."/>
            <person name="Walker D."/>
            <person name="Woodward J.R."/>
            <person name="Winckler T."/>
            <person name="Tanaka Y."/>
            <person name="Shaulsky G."/>
            <person name="Schleicher M."/>
            <person name="Weinstock G.M."/>
            <person name="Rosenthal A."/>
            <person name="Cox E.C."/>
            <person name="Chisholm R.L."/>
            <person name="Gibbs R.A."/>
            <person name="Loomis W.F."/>
            <person name="Platzer M."/>
            <person name="Kay R.R."/>
            <person name="Williams J.G."/>
            <person name="Dear P.H."/>
            <person name="Noegel A.A."/>
            <person name="Barrell B.G."/>
            <person name="Kuspa A."/>
        </authorList>
    </citation>
    <scope>NUCLEOTIDE SEQUENCE [LARGE SCALE GENOMIC DNA]</scope>
    <source>
        <strain>AX4</strain>
    </source>
</reference>
<reference key="2">
    <citation type="submission" date="2010-01" db="UniProtKB">
        <authorList>
            <person name="Bienvenut W.V."/>
            <person name="Veltman D.M."/>
            <person name="Insall R.H."/>
        </authorList>
    </citation>
    <scope>PROTEIN SEQUENCE OF 124-134 AND 147-163</scope>
    <scope>IDENTIFICATION BY MASS SPECTROMETRY</scope>
</reference>
<dbReference type="EC" id="1.1.1.37"/>
<dbReference type="EMBL" id="AAFI02000194">
    <property type="protein sequence ID" value="EAL61103.1"/>
    <property type="molecule type" value="Genomic_DNA"/>
</dbReference>
<dbReference type="RefSeq" id="XP_629516.1">
    <property type="nucleotide sequence ID" value="XM_629514.1"/>
</dbReference>
<dbReference type="SMR" id="Q54D04"/>
<dbReference type="FunCoup" id="Q54D04">
    <property type="interactions" value="152"/>
</dbReference>
<dbReference type="STRING" id="44689.Q54D04"/>
<dbReference type="PaxDb" id="44689-DDB0230188"/>
<dbReference type="EnsemblProtists" id="EAL61103">
    <property type="protein sequence ID" value="EAL61103"/>
    <property type="gene ID" value="DDB_G0292600"/>
</dbReference>
<dbReference type="GeneID" id="8628767"/>
<dbReference type="KEGG" id="ddi:DDB_G0292600"/>
<dbReference type="dictyBase" id="DDB_G0292600">
    <property type="gene designation" value="mdhB"/>
</dbReference>
<dbReference type="VEuPathDB" id="AmoebaDB:DDB_G0292600"/>
<dbReference type="eggNOG" id="KOG1496">
    <property type="taxonomic scope" value="Eukaryota"/>
</dbReference>
<dbReference type="HOGENOM" id="CLU_040727_2_0_1"/>
<dbReference type="InParanoid" id="Q54D04"/>
<dbReference type="OMA" id="DHMRDWT"/>
<dbReference type="PhylomeDB" id="Q54D04"/>
<dbReference type="PRO" id="PR:Q54D04"/>
<dbReference type="Proteomes" id="UP000002195">
    <property type="component" value="Chromosome 6"/>
</dbReference>
<dbReference type="GO" id="GO:0031012">
    <property type="term" value="C:extracellular matrix"/>
    <property type="evidence" value="ECO:0007005"/>
    <property type="project" value="dictyBase"/>
</dbReference>
<dbReference type="GO" id="GO:0005739">
    <property type="term" value="C:mitochondrion"/>
    <property type="evidence" value="ECO:0007669"/>
    <property type="project" value="UniProtKB-SubCell"/>
</dbReference>
<dbReference type="GO" id="GO:0045335">
    <property type="term" value="C:phagocytic vesicle"/>
    <property type="evidence" value="ECO:0007005"/>
    <property type="project" value="dictyBase"/>
</dbReference>
<dbReference type="GO" id="GO:0030060">
    <property type="term" value="F:L-malate dehydrogenase (NAD+) activity"/>
    <property type="evidence" value="ECO:0000318"/>
    <property type="project" value="GO_Central"/>
</dbReference>
<dbReference type="GO" id="GO:0006108">
    <property type="term" value="P:malate metabolic process"/>
    <property type="evidence" value="ECO:0000318"/>
    <property type="project" value="GO_Central"/>
</dbReference>
<dbReference type="GO" id="GO:0006734">
    <property type="term" value="P:NADH metabolic process"/>
    <property type="evidence" value="ECO:0000318"/>
    <property type="project" value="GO_Central"/>
</dbReference>
<dbReference type="GO" id="GO:0006107">
    <property type="term" value="P:oxaloacetate metabolic process"/>
    <property type="evidence" value="ECO:0000318"/>
    <property type="project" value="GO_Central"/>
</dbReference>
<dbReference type="GO" id="GO:0006099">
    <property type="term" value="P:tricarboxylic acid cycle"/>
    <property type="evidence" value="ECO:0000318"/>
    <property type="project" value="GO_Central"/>
</dbReference>
<dbReference type="CDD" id="cd01338">
    <property type="entry name" value="MDH_chloroplast-like"/>
    <property type="match status" value="1"/>
</dbReference>
<dbReference type="FunFam" id="3.40.50.720:FF:000010">
    <property type="entry name" value="Malate dehydrogenase"/>
    <property type="match status" value="1"/>
</dbReference>
<dbReference type="FunFam" id="3.90.110.10:FF:000014">
    <property type="entry name" value="Malate dehydrogenase"/>
    <property type="match status" value="1"/>
</dbReference>
<dbReference type="Gene3D" id="3.90.110.10">
    <property type="entry name" value="Lactate dehydrogenase/glycoside hydrolase, family 4, C-terminal"/>
    <property type="match status" value="1"/>
</dbReference>
<dbReference type="Gene3D" id="3.40.50.720">
    <property type="entry name" value="NAD(P)-binding Rossmann-like Domain"/>
    <property type="match status" value="1"/>
</dbReference>
<dbReference type="HAMAP" id="MF_01517">
    <property type="entry name" value="Malate_dehydrog_2"/>
    <property type="match status" value="1"/>
</dbReference>
<dbReference type="InterPro" id="IPR001557">
    <property type="entry name" value="L-lactate/malate_DH"/>
</dbReference>
<dbReference type="InterPro" id="IPR022383">
    <property type="entry name" value="Lactate/malate_DH_C"/>
</dbReference>
<dbReference type="InterPro" id="IPR001236">
    <property type="entry name" value="Lactate/malate_DH_N"/>
</dbReference>
<dbReference type="InterPro" id="IPR015955">
    <property type="entry name" value="Lactate_DH/Glyco_Ohase_4_C"/>
</dbReference>
<dbReference type="InterPro" id="IPR010945">
    <property type="entry name" value="Malate_DH_type2"/>
</dbReference>
<dbReference type="InterPro" id="IPR036291">
    <property type="entry name" value="NAD(P)-bd_dom_sf"/>
</dbReference>
<dbReference type="NCBIfam" id="TIGR01759">
    <property type="entry name" value="MalateDH-SF1"/>
    <property type="match status" value="1"/>
</dbReference>
<dbReference type="NCBIfam" id="NF003916">
    <property type="entry name" value="PRK05442.1"/>
    <property type="match status" value="1"/>
</dbReference>
<dbReference type="PANTHER" id="PTHR23382">
    <property type="entry name" value="MALATE DEHYDROGENASE"/>
    <property type="match status" value="1"/>
</dbReference>
<dbReference type="Pfam" id="PF02866">
    <property type="entry name" value="Ldh_1_C"/>
    <property type="match status" value="1"/>
</dbReference>
<dbReference type="Pfam" id="PF00056">
    <property type="entry name" value="Ldh_1_N"/>
    <property type="match status" value="1"/>
</dbReference>
<dbReference type="PIRSF" id="PIRSF000102">
    <property type="entry name" value="Lac_mal_DH"/>
    <property type="match status" value="1"/>
</dbReference>
<dbReference type="SUPFAM" id="SSF56327">
    <property type="entry name" value="LDH C-terminal domain-like"/>
    <property type="match status" value="1"/>
</dbReference>
<dbReference type="SUPFAM" id="SSF51735">
    <property type="entry name" value="NAD(P)-binding Rossmann-fold domains"/>
    <property type="match status" value="1"/>
</dbReference>
<protein>
    <recommendedName>
        <fullName>Probable malate dehydrogenase 2, mitochondrial</fullName>
        <ecNumber>1.1.1.37</ecNumber>
    </recommendedName>
</protein>
<feature type="transit peptide" description="Mitochondrion" evidence="2">
    <location>
        <begin position="1"/>
        <end position="9"/>
    </location>
</feature>
<feature type="chain" id="PRO_0000312348" description="Probable malate dehydrogenase 2, mitochondrial">
    <location>
        <begin position="10"/>
        <end position="348"/>
    </location>
</feature>
<feature type="active site" description="Proton acceptor" evidence="1">
    <location>
        <position position="208"/>
    </location>
</feature>
<feature type="binding site" evidence="1">
    <location>
        <begin position="31"/>
        <end position="37"/>
    </location>
    <ligand>
        <name>NAD(+)</name>
        <dbReference type="ChEBI" id="CHEBI:57540"/>
    </ligand>
</feature>
<feature type="binding site" evidence="1">
    <location>
        <position position="112"/>
    </location>
    <ligand>
        <name>substrate</name>
    </ligand>
</feature>
<feature type="binding site" evidence="1">
    <location>
        <position position="118"/>
    </location>
    <ligand>
        <name>substrate</name>
    </ligand>
</feature>
<feature type="binding site" evidence="1">
    <location>
        <position position="125"/>
    </location>
    <ligand>
        <name>NAD(+)</name>
        <dbReference type="ChEBI" id="CHEBI:57540"/>
    </ligand>
</feature>
<feature type="binding site" evidence="1">
    <location>
        <position position="132"/>
    </location>
    <ligand>
        <name>NAD(+)</name>
        <dbReference type="ChEBI" id="CHEBI:57540"/>
    </ligand>
</feature>
<feature type="binding site" evidence="1">
    <location>
        <begin position="150"/>
        <end position="152"/>
    </location>
    <ligand>
        <name>NAD(+)</name>
        <dbReference type="ChEBI" id="CHEBI:57540"/>
    </ligand>
</feature>
<feature type="binding site" evidence="1">
    <location>
        <position position="152"/>
    </location>
    <ligand>
        <name>substrate</name>
    </ligand>
</feature>
<feature type="binding site" evidence="1">
    <location>
        <position position="183"/>
    </location>
    <ligand>
        <name>substrate</name>
    </ligand>
</feature>
<accession>Q54D04</accession>
<keyword id="KW-0903">Direct protein sequencing</keyword>
<keyword id="KW-0496">Mitochondrion</keyword>
<keyword id="KW-0520">NAD</keyword>
<keyword id="KW-0560">Oxidoreductase</keyword>
<keyword id="KW-1185">Reference proteome</keyword>
<keyword id="KW-0809">Transit peptide</keyword>
<keyword id="KW-0816">Tricarboxylic acid cycle</keyword>
<organism>
    <name type="scientific">Dictyostelium discoideum</name>
    <name type="common">Social amoeba</name>
    <dbReference type="NCBI Taxonomy" id="44689"/>
    <lineage>
        <taxon>Eukaryota</taxon>
        <taxon>Amoebozoa</taxon>
        <taxon>Evosea</taxon>
        <taxon>Eumycetozoa</taxon>
        <taxon>Dictyostelia</taxon>
        <taxon>Dictyosteliales</taxon>
        <taxon>Dictyosteliaceae</taxon>
        <taxon>Dictyostelium</taxon>
    </lineage>
</organism>
<sequence length="348" mass="37648">MNKILTRSFSTGANFFASGKGKAPVRVAITGASGQIGYQLLFRIASGDMLGKDQPIILQCLELPGAMNSLKGVSMELDDCAFPLLKGIVQSDKPEEAFAGADYALLVGARPRSKGMERGDLLKANAEIFSVQGKALDKSANRDTLRVLVVGNPANTNALIAARNAPNIDPKRFSAMTRLDHNRGLAQLADKTGSAVTDIEKFCIWGNHSATQYPDINFGTVKGKSLVDTINDQKWVKDNFIPTVQQRGAAIIAARGLSSAASAASAAIDHMRDWTYGTNGQWTSMAIYSEGEYGADKGLYFSFPVIVDNKGKYEIVKGLKLDQFSQERFDATRKELLSEMDGVKELLP</sequence>
<gene>
    <name type="primary">mdhB</name>
    <name type="ORF">DDB_G0292600</name>
</gene>
<name>MDHB_DICDI</name>
<proteinExistence type="evidence at protein level"/>
<evidence type="ECO:0000250" key="1"/>
<evidence type="ECO:0000255" key="2"/>
<evidence type="ECO:0000305" key="3"/>